<proteinExistence type="inferred from homology"/>
<gene>
    <name evidence="1" type="primary">bamE</name>
    <name type="synonym">smpA</name>
    <name type="ordered locus">c3139</name>
</gene>
<comment type="function">
    <text evidence="1">Part of the outer membrane protein assembly complex, which is involved in assembly and insertion of beta-barrel proteins into the outer membrane.</text>
</comment>
<comment type="subunit">
    <text evidence="1">Part of the Bam complex, which is composed of the outer membrane protein BamA, and four lipoproteins BamB, BamC, BamD and BamE.</text>
</comment>
<comment type="subcellular location">
    <subcellularLocation>
        <location evidence="1">Cell outer membrane</location>
        <topology evidence="1">Lipid-anchor</topology>
    </subcellularLocation>
</comment>
<comment type="similarity">
    <text evidence="1">Belongs to the BamE family.</text>
</comment>
<feature type="signal peptide" evidence="1">
    <location>
        <begin position="1"/>
        <end position="19"/>
    </location>
</feature>
<feature type="chain" id="PRO_0000032811" description="Outer membrane protein assembly factor BamE">
    <location>
        <begin position="20"/>
        <end position="113"/>
    </location>
</feature>
<feature type="lipid moiety-binding region" description="N-palmitoyl cysteine" evidence="1">
    <location>
        <position position="20"/>
    </location>
</feature>
<feature type="lipid moiety-binding region" description="S-diacylglycerol cysteine" evidence="1">
    <location>
        <position position="20"/>
    </location>
</feature>
<accession>P0A938</accession>
<accession>P23089</accession>
<sequence length="113" mass="12302">MRCKTLTAAAAVLLMLTAGCSTLERVVYRPDINQGNYLTANDVSKIRVGMTQQQVAYALGTPLMSDPFGTNTWFYVFRQQPGHEGVTQQTLTLTFNSSGVLTNIDNKPALSGN</sequence>
<evidence type="ECO:0000255" key="1">
    <source>
        <dbReference type="HAMAP-Rule" id="MF_00925"/>
    </source>
</evidence>
<name>BAME_ECOL6</name>
<organism>
    <name type="scientific">Escherichia coli O6:H1 (strain CFT073 / ATCC 700928 / UPEC)</name>
    <dbReference type="NCBI Taxonomy" id="199310"/>
    <lineage>
        <taxon>Bacteria</taxon>
        <taxon>Pseudomonadati</taxon>
        <taxon>Pseudomonadota</taxon>
        <taxon>Gammaproteobacteria</taxon>
        <taxon>Enterobacterales</taxon>
        <taxon>Enterobacteriaceae</taxon>
        <taxon>Escherichia</taxon>
    </lineage>
</organism>
<reference key="1">
    <citation type="journal article" date="2002" name="Proc. Natl. Acad. Sci. U.S.A.">
        <title>Extensive mosaic structure revealed by the complete genome sequence of uropathogenic Escherichia coli.</title>
        <authorList>
            <person name="Welch R.A."/>
            <person name="Burland V."/>
            <person name="Plunkett G. III"/>
            <person name="Redford P."/>
            <person name="Roesch P."/>
            <person name="Rasko D."/>
            <person name="Buckles E.L."/>
            <person name="Liou S.-R."/>
            <person name="Boutin A."/>
            <person name="Hackett J."/>
            <person name="Stroud D."/>
            <person name="Mayhew G.F."/>
            <person name="Rose D.J."/>
            <person name="Zhou S."/>
            <person name="Schwartz D.C."/>
            <person name="Perna N.T."/>
            <person name="Mobley H.L.T."/>
            <person name="Donnenberg M.S."/>
            <person name="Blattner F.R."/>
        </authorList>
    </citation>
    <scope>NUCLEOTIDE SEQUENCE [LARGE SCALE GENOMIC DNA]</scope>
    <source>
        <strain>CFT073 / ATCC 700928 / UPEC</strain>
    </source>
</reference>
<dbReference type="EMBL" id="AE014075">
    <property type="protein sequence ID" value="AAN81589.1"/>
    <property type="molecule type" value="Genomic_DNA"/>
</dbReference>
<dbReference type="RefSeq" id="WP_001203437.1">
    <property type="nucleotide sequence ID" value="NZ_CP051263.1"/>
</dbReference>
<dbReference type="BMRB" id="P0A938"/>
<dbReference type="EMDB" id="EMD-10247"/>
<dbReference type="EMDB" id="EMD-10248"/>
<dbReference type="EMDB" id="EMD-10249"/>
<dbReference type="EMDB" id="EMD-10250"/>
<dbReference type="EMDB" id="EMD-10251"/>
<dbReference type="EMDB" id="EMD-10252"/>
<dbReference type="EMDB" id="EMD-10253"/>
<dbReference type="EMDB" id="EMD-10254"/>
<dbReference type="EMDB" id="EMD-10255"/>
<dbReference type="EMDB" id="EMD-10268"/>
<dbReference type="EMDB" id="EMD-10269"/>
<dbReference type="EMDB" id="EMD-10270"/>
<dbReference type="EMDB" id="EMD-10271"/>
<dbReference type="EMDB" id="EMD-10272"/>
<dbReference type="EMDB" id="EMD-10274"/>
<dbReference type="EMDB" id="EMD-10275"/>
<dbReference type="EMDB" id="EMD-10276"/>
<dbReference type="SMR" id="P0A938"/>
<dbReference type="STRING" id="199310.c3139"/>
<dbReference type="GeneID" id="93774466"/>
<dbReference type="KEGG" id="ecc:c3139"/>
<dbReference type="eggNOG" id="COG2913">
    <property type="taxonomic scope" value="Bacteria"/>
</dbReference>
<dbReference type="HOGENOM" id="CLU_083835_4_0_6"/>
<dbReference type="BioCyc" id="ECOL199310:C3139-MONOMER"/>
<dbReference type="Proteomes" id="UP000001410">
    <property type="component" value="Chromosome"/>
</dbReference>
<dbReference type="GO" id="GO:1990063">
    <property type="term" value="C:Bam protein complex"/>
    <property type="evidence" value="ECO:0007669"/>
    <property type="project" value="TreeGrafter"/>
</dbReference>
<dbReference type="GO" id="GO:0030674">
    <property type="term" value="F:protein-macromolecule adaptor activity"/>
    <property type="evidence" value="ECO:0007669"/>
    <property type="project" value="TreeGrafter"/>
</dbReference>
<dbReference type="GO" id="GO:0043165">
    <property type="term" value="P:Gram-negative-bacterium-type cell outer membrane assembly"/>
    <property type="evidence" value="ECO:0007669"/>
    <property type="project" value="UniProtKB-UniRule"/>
</dbReference>
<dbReference type="GO" id="GO:0051205">
    <property type="term" value="P:protein insertion into membrane"/>
    <property type="evidence" value="ECO:0007669"/>
    <property type="project" value="UniProtKB-UniRule"/>
</dbReference>
<dbReference type="FunFam" id="3.30.1450.10:FF:000001">
    <property type="entry name" value="Outer membrane protein assembly factor BamE"/>
    <property type="match status" value="1"/>
</dbReference>
<dbReference type="Gene3D" id="3.30.1450.10">
    <property type="match status" value="1"/>
</dbReference>
<dbReference type="HAMAP" id="MF_00925">
    <property type="entry name" value="OM_assembly_BamE"/>
    <property type="match status" value="1"/>
</dbReference>
<dbReference type="InterPro" id="IPR026592">
    <property type="entry name" value="BamE"/>
</dbReference>
<dbReference type="InterPro" id="IPR037873">
    <property type="entry name" value="BamE-like"/>
</dbReference>
<dbReference type="InterPro" id="IPR007450">
    <property type="entry name" value="BamE_dom"/>
</dbReference>
<dbReference type="NCBIfam" id="NF008585">
    <property type="entry name" value="PRK11548.1"/>
    <property type="match status" value="1"/>
</dbReference>
<dbReference type="PANTHER" id="PTHR37482">
    <property type="entry name" value="OUTER MEMBRANE PROTEIN ASSEMBLY FACTOR BAME"/>
    <property type="match status" value="1"/>
</dbReference>
<dbReference type="PANTHER" id="PTHR37482:SF1">
    <property type="entry name" value="OUTER MEMBRANE PROTEIN ASSEMBLY FACTOR BAME"/>
    <property type="match status" value="1"/>
</dbReference>
<dbReference type="Pfam" id="PF04355">
    <property type="entry name" value="BamE"/>
    <property type="match status" value="1"/>
</dbReference>
<dbReference type="PROSITE" id="PS51257">
    <property type="entry name" value="PROKAR_LIPOPROTEIN"/>
    <property type="match status" value="1"/>
</dbReference>
<protein>
    <recommendedName>
        <fullName evidence="1">Outer membrane protein assembly factor BamE</fullName>
    </recommendedName>
</protein>
<keyword id="KW-0998">Cell outer membrane</keyword>
<keyword id="KW-0449">Lipoprotein</keyword>
<keyword id="KW-0472">Membrane</keyword>
<keyword id="KW-0564">Palmitate</keyword>
<keyword id="KW-1185">Reference proteome</keyword>
<keyword id="KW-0732">Signal</keyword>